<protein>
    <recommendedName>
        <fullName>CD209 antigen</fullName>
    </recommendedName>
    <alternativeName>
        <fullName>Dendritic cell-specific ICAM-3-grabbing non-integrin 1</fullName>
        <shortName>DC-SIGN1</shortName>
    </alternativeName>
    <cdAntigenName>CD209</cdAntigenName>
</protein>
<accession>Q95J96</accession>
<accession>Q8HXL6</accession>
<accession>Q8HXL7</accession>
<accession>Q8HXL8</accession>
<accession>Q8HXL9</accession>
<accession>Q8SQB2</accession>
<accession>Q95LA8</accession>
<organism>
    <name type="scientific">Macaca mulatta</name>
    <name type="common">Rhesus macaque</name>
    <dbReference type="NCBI Taxonomy" id="9544"/>
    <lineage>
        <taxon>Eukaryota</taxon>
        <taxon>Metazoa</taxon>
        <taxon>Chordata</taxon>
        <taxon>Craniata</taxon>
        <taxon>Vertebrata</taxon>
        <taxon>Euteleostomi</taxon>
        <taxon>Mammalia</taxon>
        <taxon>Eutheria</taxon>
        <taxon>Euarchontoglires</taxon>
        <taxon>Primates</taxon>
        <taxon>Haplorrhini</taxon>
        <taxon>Catarrhini</taxon>
        <taxon>Cercopithecidae</taxon>
        <taxon>Cercopithecinae</taxon>
        <taxon>Macaca</taxon>
    </lineage>
</organism>
<dbReference type="EMBL" id="AF391086">
    <property type="protein sequence ID" value="AAK97459.1"/>
    <property type="molecule type" value="mRNA"/>
</dbReference>
<dbReference type="EMBL" id="AF369755">
    <property type="protein sequence ID" value="AAL14438.1"/>
    <property type="molecule type" value="mRNA"/>
</dbReference>
<dbReference type="EMBL" id="AY040319">
    <property type="protein sequence ID" value="AAK74185.1"/>
    <property type="molecule type" value="mRNA"/>
</dbReference>
<dbReference type="EMBL" id="AJ439425">
    <property type="protein sequence ID" value="CAD28396.1"/>
    <property type="molecule type" value="Genomic_DNA"/>
</dbReference>
<dbReference type="EMBL" id="AJ439425">
    <property type="protein sequence ID" value="CAD28397.1"/>
    <property type="molecule type" value="Genomic_DNA"/>
</dbReference>
<dbReference type="EMBL" id="AJ439425">
    <property type="protein sequence ID" value="CAD28398.1"/>
    <property type="molecule type" value="Genomic_DNA"/>
</dbReference>
<dbReference type="EMBL" id="AJ439425">
    <property type="protein sequence ID" value="CAD28399.1"/>
    <property type="molecule type" value="Genomic_DNA"/>
</dbReference>
<dbReference type="RefSeq" id="NP_001028042.1">
    <property type="nucleotide sequence ID" value="NM_001032870.1"/>
</dbReference>
<dbReference type="RefSeq" id="NP_001028261.1">
    <property type="nucleotide sequence ID" value="NM_001033089.1"/>
</dbReference>
<dbReference type="SMR" id="Q95J96"/>
<dbReference type="FunCoup" id="Q95J96">
    <property type="interactions" value="245"/>
</dbReference>
<dbReference type="STRING" id="9544.ENSMMUP00000029559"/>
<dbReference type="GlyCosmos" id="Q95J96">
    <property type="glycosylation" value="1 site, No reported glycans"/>
</dbReference>
<dbReference type="PaxDb" id="9544-ENSMMUP00000029556"/>
<dbReference type="GeneID" id="574211"/>
<dbReference type="KEGG" id="mcc:574211"/>
<dbReference type="CTD" id="30835"/>
<dbReference type="eggNOG" id="KOG4297">
    <property type="taxonomic scope" value="Eukaryota"/>
</dbReference>
<dbReference type="InParanoid" id="Q95J96"/>
<dbReference type="OrthoDB" id="8950604at2759"/>
<dbReference type="Proteomes" id="UP000006718">
    <property type="component" value="Unassembled WGS sequence"/>
</dbReference>
<dbReference type="GO" id="GO:0009897">
    <property type="term" value="C:external side of plasma membrane"/>
    <property type="evidence" value="ECO:0000318"/>
    <property type="project" value="GO_Central"/>
</dbReference>
<dbReference type="GO" id="GO:0005537">
    <property type="term" value="F:D-mannose binding"/>
    <property type="evidence" value="ECO:0000318"/>
    <property type="project" value="GO_Central"/>
</dbReference>
<dbReference type="GO" id="GO:0046872">
    <property type="term" value="F:metal ion binding"/>
    <property type="evidence" value="ECO:0007669"/>
    <property type="project" value="UniProtKB-KW"/>
</dbReference>
<dbReference type="GO" id="GO:0038187">
    <property type="term" value="F:pattern recognition receptor activity"/>
    <property type="evidence" value="ECO:0000318"/>
    <property type="project" value="GO_Central"/>
</dbReference>
<dbReference type="GO" id="GO:0002250">
    <property type="term" value="P:adaptive immune response"/>
    <property type="evidence" value="ECO:0007669"/>
    <property type="project" value="UniProtKB-KW"/>
</dbReference>
<dbReference type="GO" id="GO:0007155">
    <property type="term" value="P:cell adhesion"/>
    <property type="evidence" value="ECO:0007669"/>
    <property type="project" value="UniProtKB-KW"/>
</dbReference>
<dbReference type="GO" id="GO:0006897">
    <property type="term" value="P:endocytosis"/>
    <property type="evidence" value="ECO:0007669"/>
    <property type="project" value="UniProtKB-KW"/>
</dbReference>
<dbReference type="GO" id="GO:0006955">
    <property type="term" value="P:immune response"/>
    <property type="evidence" value="ECO:0000318"/>
    <property type="project" value="GO_Central"/>
</dbReference>
<dbReference type="GO" id="GO:0045087">
    <property type="term" value="P:innate immune response"/>
    <property type="evidence" value="ECO:0007669"/>
    <property type="project" value="UniProtKB-KW"/>
</dbReference>
<dbReference type="CDD" id="cd03590">
    <property type="entry name" value="CLECT_DC-SIGN_like"/>
    <property type="match status" value="1"/>
</dbReference>
<dbReference type="FunFam" id="3.10.100.10:FF:000044">
    <property type="entry name" value="CD209 antigen, isoform CRA_b"/>
    <property type="match status" value="1"/>
</dbReference>
<dbReference type="Gene3D" id="3.10.100.10">
    <property type="entry name" value="Mannose-Binding Protein A, subunit A"/>
    <property type="match status" value="1"/>
</dbReference>
<dbReference type="InterPro" id="IPR001304">
    <property type="entry name" value="C-type_lectin-like"/>
</dbReference>
<dbReference type="InterPro" id="IPR016186">
    <property type="entry name" value="C-type_lectin-like/link_sf"/>
</dbReference>
<dbReference type="InterPro" id="IPR050111">
    <property type="entry name" value="C-type_lectin/snaclec_domain"/>
</dbReference>
<dbReference type="InterPro" id="IPR018378">
    <property type="entry name" value="C-type_lectin_CS"/>
</dbReference>
<dbReference type="InterPro" id="IPR033989">
    <property type="entry name" value="CD209-like_CTLD"/>
</dbReference>
<dbReference type="InterPro" id="IPR016187">
    <property type="entry name" value="CTDL_fold"/>
</dbReference>
<dbReference type="PANTHER" id="PTHR22803">
    <property type="entry name" value="MANNOSE, PHOSPHOLIPASE, LECTIN RECEPTOR RELATED"/>
    <property type="match status" value="1"/>
</dbReference>
<dbReference type="Pfam" id="PF00059">
    <property type="entry name" value="Lectin_C"/>
    <property type="match status" value="1"/>
</dbReference>
<dbReference type="SMART" id="SM00034">
    <property type="entry name" value="CLECT"/>
    <property type="match status" value="1"/>
</dbReference>
<dbReference type="SUPFAM" id="SSF56436">
    <property type="entry name" value="C-type lectin-like"/>
    <property type="match status" value="1"/>
</dbReference>
<dbReference type="PROSITE" id="PS00615">
    <property type="entry name" value="C_TYPE_LECTIN_1"/>
    <property type="match status" value="1"/>
</dbReference>
<dbReference type="PROSITE" id="PS50041">
    <property type="entry name" value="C_TYPE_LECTIN_2"/>
    <property type="match status" value="1"/>
</dbReference>
<proteinExistence type="evidence at protein level"/>
<feature type="chain" id="PRO_0000046599" description="CD209 antigen">
    <location>
        <begin position="1"/>
        <end position="404"/>
    </location>
</feature>
<feature type="topological domain" description="Cytoplasmic" evidence="3">
    <location>
        <begin position="1"/>
        <end position="37"/>
    </location>
</feature>
<feature type="transmembrane region" description="Helical; Signal-anchor for type II membrane protein" evidence="3">
    <location>
        <begin position="38"/>
        <end position="58"/>
    </location>
</feature>
<feature type="topological domain" description="Extracellular" evidence="3">
    <location>
        <begin position="59"/>
        <end position="404"/>
    </location>
</feature>
<feature type="repeat" description="1">
    <location>
        <begin position="96"/>
        <end position="118"/>
    </location>
</feature>
<feature type="repeat" description="2">
    <location>
        <begin position="119"/>
        <end position="141"/>
    </location>
</feature>
<feature type="repeat" description="3">
    <location>
        <begin position="142"/>
        <end position="164"/>
    </location>
</feature>
<feature type="repeat" description="4">
    <location>
        <begin position="165"/>
        <end position="187"/>
    </location>
</feature>
<feature type="repeat" description="5">
    <location>
        <begin position="188"/>
        <end position="210"/>
    </location>
</feature>
<feature type="repeat" description="6">
    <location>
        <begin position="211"/>
        <end position="233"/>
    </location>
</feature>
<feature type="repeat" description="7">
    <location>
        <begin position="234"/>
        <end position="257"/>
    </location>
</feature>
<feature type="domain" description="C-type lectin" evidence="4">
    <location>
        <begin position="263"/>
        <end position="378"/>
    </location>
</feature>
<feature type="region of interest" description="7 X approximate tandem repeats">
    <location>
        <begin position="96"/>
        <end position="257"/>
    </location>
</feature>
<feature type="region of interest" description="Disordered" evidence="5">
    <location>
        <begin position="382"/>
        <end position="404"/>
    </location>
</feature>
<feature type="short sequence motif" description="Endocytosis signal" evidence="1">
    <location>
        <begin position="14"/>
        <end position="15"/>
    </location>
</feature>
<feature type="short sequence motif" description="Endocytosis signal" evidence="3">
    <location>
        <begin position="16"/>
        <end position="18"/>
    </location>
</feature>
<feature type="short sequence motif" description="Endocytosis signal" evidence="3">
    <location>
        <begin position="31"/>
        <end position="34"/>
    </location>
</feature>
<feature type="binding site" evidence="1">
    <location>
        <position position="347"/>
    </location>
    <ligand>
        <name>Ca(2+)</name>
        <dbReference type="ChEBI" id="CHEBI:29108"/>
    </ligand>
</feature>
<feature type="binding site" evidence="1">
    <location>
        <position position="349"/>
    </location>
    <ligand>
        <name>Ca(2+)</name>
        <dbReference type="ChEBI" id="CHEBI:29108"/>
    </ligand>
</feature>
<feature type="binding site" evidence="1">
    <location>
        <position position="351"/>
    </location>
    <ligand>
        <name>Ca(2+)</name>
        <dbReference type="ChEBI" id="CHEBI:29108"/>
    </ligand>
</feature>
<feature type="binding site" evidence="1">
    <location>
        <position position="354"/>
    </location>
    <ligand>
        <name>Ca(2+)</name>
        <dbReference type="ChEBI" id="CHEBI:29108"/>
    </ligand>
</feature>
<feature type="binding site" evidence="1">
    <location>
        <position position="365"/>
    </location>
    <ligand>
        <name>Ca(2+)</name>
        <dbReference type="ChEBI" id="CHEBI:29108"/>
    </ligand>
</feature>
<feature type="binding site" evidence="1">
    <location>
        <position position="366"/>
    </location>
    <ligand>
        <name>Ca(2+)</name>
        <dbReference type="ChEBI" id="CHEBI:29108"/>
    </ligand>
</feature>
<feature type="glycosylation site" description="N-linked (GlcNAc...) asparagine" evidence="3">
    <location>
        <position position="80"/>
    </location>
</feature>
<feature type="disulfide bond" evidence="4">
    <location>
        <begin position="256"/>
        <end position="267"/>
    </location>
</feature>
<feature type="disulfide bond" evidence="4">
    <location>
        <begin position="284"/>
        <end position="377"/>
    </location>
</feature>
<feature type="disulfide bond" evidence="4">
    <location>
        <begin position="356"/>
        <end position="369"/>
    </location>
</feature>
<feature type="splice variant" id="VSP_010051" description="In isoform 5." evidence="7">
    <location>
        <begin position="74"/>
        <end position="308"/>
    </location>
</feature>
<feature type="splice variant" id="VSP_010052" description="In isoform 4." evidence="7">
    <original>LQEIYQELTRLKAAVGELPEKSKMQEIYQELSRLKAAVGDLPEKSKQQEIYQELSRLKAAVGDLPEKSKQQEIYQKLTQLKAAVDGLPDRSKQ</original>
    <variation>L</variation>
    <location>
        <begin position="143"/>
        <end position="235"/>
    </location>
</feature>
<feature type="splice variant" id="VSP_010053" description="In isoform 2 and isoform 3." evidence="6">
    <location>
        <begin position="165"/>
        <end position="187"/>
    </location>
</feature>
<feature type="splice variant" id="VSP_010054" description="In isoform 3." evidence="7">
    <location>
        <begin position="301"/>
        <end position="306"/>
    </location>
</feature>
<feature type="sequence conflict" description="In Ref. 2 and 3." evidence="7" ref="2 3">
    <original>D</original>
    <variation>G</variation>
    <location>
        <position position="13"/>
    </location>
</feature>
<feature type="sequence conflict" description="In Ref. 1; AAK97459." evidence="7" ref="1">
    <original>G</original>
    <variation>D</variation>
    <location>
        <position position="112"/>
    </location>
</feature>
<feature type="sequence conflict" description="In Ref. 1; AAK97459." evidence="7" ref="1">
    <original>R</original>
    <variation>W</variation>
    <location>
        <position position="152"/>
    </location>
</feature>
<feature type="sequence conflict" description="In Ref. 1; AAK97459." evidence="7" ref="1">
    <original>S</original>
    <variation>T</variation>
    <location>
        <position position="197"/>
    </location>
</feature>
<feature type="sequence conflict" description="In Ref. 4; CAD28397/CAD28398." evidence="7" ref="4">
    <original>D</original>
    <variation>E</variation>
    <location>
        <position position="205"/>
    </location>
</feature>
<feature type="sequence conflict" description="In Ref. 2 and 3." evidence="7" ref="2 3">
    <original>H</original>
    <variation>R</variation>
    <location>
        <position position="254"/>
    </location>
</feature>
<feature type="sequence conflict" description="In Ref. 2 and 3." evidence="7" ref="2 3">
    <original>D</original>
    <variation>N</variation>
    <location>
        <position position="279"/>
    </location>
</feature>
<feature type="sequence conflict" description="In Ref. 3; AAK74185." evidence="7" ref="3">
    <original>A</original>
    <variation>E</variation>
    <location>
        <position position="404"/>
    </location>
</feature>
<keyword id="KW-1064">Adaptive immunity</keyword>
<keyword id="KW-0025">Alternative splicing</keyword>
<keyword id="KW-0106">Calcium</keyword>
<keyword id="KW-0130">Cell adhesion</keyword>
<keyword id="KW-1015">Disulfide bond</keyword>
<keyword id="KW-0254">Endocytosis</keyword>
<keyword id="KW-0325">Glycoprotein</keyword>
<keyword id="KW-0391">Immunity</keyword>
<keyword id="KW-0399">Innate immunity</keyword>
<keyword id="KW-0430">Lectin</keyword>
<keyword id="KW-0465">Mannose-binding</keyword>
<keyword id="KW-0472">Membrane</keyword>
<keyword id="KW-0479">Metal-binding</keyword>
<keyword id="KW-0675">Receptor</keyword>
<keyword id="KW-1185">Reference proteome</keyword>
<keyword id="KW-0677">Repeat</keyword>
<keyword id="KW-0735">Signal-anchor</keyword>
<keyword id="KW-0812">Transmembrane</keyword>
<keyword id="KW-1133">Transmembrane helix</keyword>
<sequence>MSDSKEPRLQQLDLLEEEQLGGVGFRQTRGYKSLAGCLGHGPLVLQLLSFTLLAGLLVQVSKVPSSLSQGQSKQDAIYQNLTQLKVAVSELSEKSKQQEIYQELTRLKAAVGELPEKSKQQEIYEELTRLKAAVGELPEKSKLQEIYQELTRLKAAVGELPEKSKMQEIYQELSRLKAAVGDLPEKSKQQEIYQELSRLKAAVGDLPEKSKQQEIYQKLTQLKAAVDGLPDRSKQQEIYQELIQLKAAVERLCHPCPWEWTFFQGNCYFMSNSQRNWHDSITACQEVGAQLVVIKSAEEQNFLQLQSSRSNRFTWMGLSDLNHEGTWQWVDGSPLLPSFKQYWNKGEPNNIGEEDCAEFSGNGWNDDKCNLAKFWICKKSAASCSGDEERLLSPAPTTPNPPPA</sequence>
<reference key="1">
    <citation type="journal article" date="2001" name="Immunol. Lett.">
        <title>Rhesus and chimpanzee DC-SIGN act as HIV/SIV gp120 trans-receptors, similar as human DC-SIGN.</title>
        <authorList>
            <person name="Geijtenbeek T.B.H."/>
            <person name="Koopman G."/>
            <person name="van Duijnhoven G.C.F."/>
            <person name="van Vliet S.J."/>
            <person name="van Schijndel A.C.H.W."/>
            <person name="Engering A."/>
            <person name="Heeney J.L."/>
            <person name="van Kooyk Y."/>
        </authorList>
    </citation>
    <scope>NUCLEOTIDE SEQUENCE (ISOFORM 1)</scope>
    <scope>TISSUE SPECIFICITY</scope>
    <scope>INTERACTION WITH ICAM2; ICAM3 AND HIV-1 GP120</scope>
    <source>
        <tissue>Lymph node</tissue>
    </source>
</reference>
<reference key="2">
    <citation type="journal article" date="2001" name="J. Virol.">
        <title>Functional and antigenic characterization of human, rhesus macaque, pigtailed macaque, and murine DC-SIGN.</title>
        <authorList>
            <person name="Baribaud F."/>
            <person name="Pohlmann S."/>
            <person name="Sparwasser T."/>
            <person name="Kimata M.T."/>
            <person name="Choi Y.K."/>
            <person name="Haggarty B.S."/>
            <person name="Ahmad N."/>
            <person name="Macfarlan T."/>
            <person name="Edwards T.G."/>
            <person name="Leslie G.J."/>
            <person name="Arnason J."/>
            <person name="Reinhart T.A."/>
            <person name="Kimata J.T."/>
            <person name="Littman D.R."/>
            <person name="Hoxie J.A."/>
            <person name="Doms R.W."/>
        </authorList>
    </citation>
    <scope>NUCLEOTIDE SEQUENCE (ISOFORM 2)</scope>
    <scope>INTERACTION WITH HIV-1; HIV-2; SIV AND ICAM3</scope>
</reference>
<reference key="3">
    <citation type="journal article" date="2002" name="Proc. Natl. Acad. Sci. U.S.A.">
        <title>Rhesus macaque dendritic cells efficiently transmit primate lentiviruses independently of DC-SIGN.</title>
        <authorList>
            <person name="Wu L."/>
            <person name="Bashirova A.A."/>
            <person name="Martin T.D."/>
            <person name="Villamide L."/>
            <person name="Mehlhop E."/>
            <person name="Chertov A.O."/>
            <person name="Unutmaz D."/>
            <person name="Pope M."/>
            <person name="Carrington M."/>
            <person name="Kewalramani V.N."/>
        </authorList>
    </citation>
    <scope>NUCLEOTIDE SEQUENCE [MRNA] (ISOFORM 2)</scope>
    <scope>INTERACTION WITH HIV-1 AND SIV</scope>
</reference>
<reference key="4">
    <citation type="journal article" date="2002" name="AIDS Res. Hum. Retroviruses">
        <title>Gene for Chinese rhesus macaque DC-SIGN predicts the existence of A but not B isoforms of the protein.</title>
        <authorList>
            <person name="Santos P.R."/>
            <person name="Petitprez K."/>
            <person name="Butor C."/>
        </authorList>
    </citation>
    <scope>NUCLEOTIDE SEQUENCE [GENOMIC DNA] (ISOFORMS 2; 3; 4 AND 5)</scope>
</reference>
<comment type="function">
    <text evidence="1">Pathogen-recognition receptor expressed on the surface of immature dendritic cells (DCs) and involved in initiation of primary immune response. Thought to mediate the endocytosis of pathogens which are subsequently degraded in lysosomal compartments. The receptor returns to the cell membrane surface and the pathogen-derived antigens are presented to resting T-cells via MHC class II proteins to initiate the adaptive immune response. Probably recognizes in a calcium-dependent manner high mannose N-linked oligosaccharides in a variety of pathogen antigens (By similarity).</text>
</comment>
<comment type="function">
    <text evidence="1">On DCs it is a high affinity receptor for ICAM2 and ICAM3 by binding to mannose-like carbohydrates. May act as a DC rolling receptor that mediates transendothelial migration of DC presursors from blood to tissues by binding endothelial ICAM2. Seems to regulate DC-induced T-cell proliferation by binding to ICAM3 on T-cells in the immunological synapse formed between DC and T-cells (By similarity).</text>
</comment>
<comment type="subunit">
    <text evidence="2">Homotetramer. Interacts with C1QBP; the interaction is indicative for a C1q:C1QBP:CD209 signaling complex. Interacts with ICAM2 and ICAM3 by binding to mannose-like carbohydrates. Interacts (via C-type lectin domain) with CEACAM1 (via Lewis X moieties); this interaction is regulated by the glycosylation pattern of CEACAM1 on cell types and regulates contact between dendritic cells and neutrophils.</text>
</comment>
<comment type="subcellular location">
    <subcellularLocation>
        <location evidence="1">Membrane</location>
        <topology evidence="1">Single-pass type II membrane protein</topology>
    </subcellularLocation>
</comment>
<comment type="alternative products">
    <event type="alternative splicing"/>
    <isoform>
        <id>Q95J96-1</id>
        <name>1</name>
        <sequence type="displayed"/>
    </isoform>
    <isoform>
        <id>Q95J96-2</id>
        <name>2</name>
        <sequence type="described" ref="VSP_010053"/>
    </isoform>
    <isoform>
        <id>Q95J96-3</id>
        <name>3</name>
        <sequence type="described" ref="VSP_010053 VSP_010054"/>
    </isoform>
    <isoform>
        <id>Q95J96-4</id>
        <name>4</name>
        <sequence type="described" ref="VSP_010052"/>
    </isoform>
    <isoform>
        <id>Q95J96-5</id>
        <name>5</name>
        <sequence type="described" ref="VSP_010051"/>
    </isoform>
</comment>
<comment type="miscellaneous">
    <text>In vitro, is a receptor for HIV-1, HIV-2 and SIV and transmits viruses to permissive T-cells.</text>
</comment>
<name>CD209_MACMU</name>
<evidence type="ECO:0000250" key="1"/>
<evidence type="ECO:0000250" key="2">
    <source>
        <dbReference type="UniProtKB" id="Q9NNX6"/>
    </source>
</evidence>
<evidence type="ECO:0000255" key="3"/>
<evidence type="ECO:0000255" key="4">
    <source>
        <dbReference type="PROSITE-ProRule" id="PRU00040"/>
    </source>
</evidence>
<evidence type="ECO:0000256" key="5">
    <source>
        <dbReference type="SAM" id="MobiDB-lite"/>
    </source>
</evidence>
<evidence type="ECO:0000303" key="6">
    <source>
    </source>
</evidence>
<evidence type="ECO:0000305" key="7"/>
<gene>
    <name type="primary">CD209</name>
</gene>